<reference key="1">
    <citation type="journal article" date="2004" name="Nature">
        <title>Genome evolution in yeasts.</title>
        <authorList>
            <person name="Dujon B."/>
            <person name="Sherman D."/>
            <person name="Fischer G."/>
            <person name="Durrens P."/>
            <person name="Casaregola S."/>
            <person name="Lafontaine I."/>
            <person name="de Montigny J."/>
            <person name="Marck C."/>
            <person name="Neuveglise C."/>
            <person name="Talla E."/>
            <person name="Goffard N."/>
            <person name="Frangeul L."/>
            <person name="Aigle M."/>
            <person name="Anthouard V."/>
            <person name="Babour A."/>
            <person name="Barbe V."/>
            <person name="Barnay S."/>
            <person name="Blanchin S."/>
            <person name="Beckerich J.-M."/>
            <person name="Beyne E."/>
            <person name="Bleykasten C."/>
            <person name="Boisrame A."/>
            <person name="Boyer J."/>
            <person name="Cattolico L."/>
            <person name="Confanioleri F."/>
            <person name="de Daruvar A."/>
            <person name="Despons L."/>
            <person name="Fabre E."/>
            <person name="Fairhead C."/>
            <person name="Ferry-Dumazet H."/>
            <person name="Groppi A."/>
            <person name="Hantraye F."/>
            <person name="Hennequin C."/>
            <person name="Jauniaux N."/>
            <person name="Joyet P."/>
            <person name="Kachouri R."/>
            <person name="Kerrest A."/>
            <person name="Koszul R."/>
            <person name="Lemaire M."/>
            <person name="Lesur I."/>
            <person name="Ma L."/>
            <person name="Muller H."/>
            <person name="Nicaud J.-M."/>
            <person name="Nikolski M."/>
            <person name="Oztas S."/>
            <person name="Ozier-Kalogeropoulos O."/>
            <person name="Pellenz S."/>
            <person name="Potier S."/>
            <person name="Richard G.-F."/>
            <person name="Straub M.-L."/>
            <person name="Suleau A."/>
            <person name="Swennen D."/>
            <person name="Tekaia F."/>
            <person name="Wesolowski-Louvel M."/>
            <person name="Westhof E."/>
            <person name="Wirth B."/>
            <person name="Zeniou-Meyer M."/>
            <person name="Zivanovic Y."/>
            <person name="Bolotin-Fukuhara M."/>
            <person name="Thierry A."/>
            <person name="Bouchier C."/>
            <person name="Caudron B."/>
            <person name="Scarpelli C."/>
            <person name="Gaillardin C."/>
            <person name="Weissenbach J."/>
            <person name="Wincker P."/>
            <person name="Souciet J.-L."/>
        </authorList>
    </citation>
    <scope>NUCLEOTIDE SEQUENCE [LARGE SCALE GENOMIC DNA]</scope>
    <source>
        <strain>ATCC 36239 / CBS 767 / BCRC 21394 / JCM 1990 / NBRC 0083 / IGC 2968</strain>
    </source>
</reference>
<name>BUR1_DEBHA</name>
<accession>Q6BV06</accession>
<gene>
    <name type="primary">BUR1</name>
    <name type="ordered locus">DEHA2C06358g</name>
</gene>
<comment type="function">
    <text evidence="1">Serine/threonine-protein kinase involved in transcription regulation. Phosphorylates the UBC2/RAD6 ubiquitin-conjugating enzyme (E2), leading to monoubiquitination of histone H2B and the silencing of telomeric-associated genes. Also required for histone H3 methylation. Necessary for the recovery from pheromone-induced growth arrest in the cell cycle G1 phase (By similarity).</text>
</comment>
<comment type="catalytic activity">
    <reaction>
        <text>L-seryl-[protein] + ATP = O-phospho-L-seryl-[protein] + ADP + H(+)</text>
        <dbReference type="Rhea" id="RHEA:17989"/>
        <dbReference type="Rhea" id="RHEA-COMP:9863"/>
        <dbReference type="Rhea" id="RHEA-COMP:11604"/>
        <dbReference type="ChEBI" id="CHEBI:15378"/>
        <dbReference type="ChEBI" id="CHEBI:29999"/>
        <dbReference type="ChEBI" id="CHEBI:30616"/>
        <dbReference type="ChEBI" id="CHEBI:83421"/>
        <dbReference type="ChEBI" id="CHEBI:456216"/>
        <dbReference type="EC" id="2.7.11.22"/>
    </reaction>
</comment>
<comment type="catalytic activity">
    <reaction>
        <text>L-threonyl-[protein] + ATP = O-phospho-L-threonyl-[protein] + ADP + H(+)</text>
        <dbReference type="Rhea" id="RHEA:46608"/>
        <dbReference type="Rhea" id="RHEA-COMP:11060"/>
        <dbReference type="Rhea" id="RHEA-COMP:11605"/>
        <dbReference type="ChEBI" id="CHEBI:15378"/>
        <dbReference type="ChEBI" id="CHEBI:30013"/>
        <dbReference type="ChEBI" id="CHEBI:30616"/>
        <dbReference type="ChEBI" id="CHEBI:61977"/>
        <dbReference type="ChEBI" id="CHEBI:456216"/>
        <dbReference type="EC" id="2.7.11.22"/>
    </reaction>
</comment>
<comment type="catalytic activity">
    <reaction>
        <text>[DNA-directed RNA polymerase] + ATP = phospho-[DNA-directed RNA polymerase] + ADP + H(+)</text>
        <dbReference type="Rhea" id="RHEA:10216"/>
        <dbReference type="Rhea" id="RHEA-COMP:11321"/>
        <dbReference type="Rhea" id="RHEA-COMP:11322"/>
        <dbReference type="ChEBI" id="CHEBI:15378"/>
        <dbReference type="ChEBI" id="CHEBI:30616"/>
        <dbReference type="ChEBI" id="CHEBI:43176"/>
        <dbReference type="ChEBI" id="CHEBI:68546"/>
        <dbReference type="ChEBI" id="CHEBI:456216"/>
        <dbReference type="EC" id="2.7.11.23"/>
    </reaction>
</comment>
<comment type="subcellular location">
    <subcellularLocation>
        <location evidence="1">Nucleus</location>
    </subcellularLocation>
</comment>
<comment type="similarity">
    <text evidence="5">Belongs to the protein kinase superfamily. CMGC Ser/Thr protein kinase family. CDC2/CDKX subfamily.</text>
</comment>
<keyword id="KW-0067">ATP-binding</keyword>
<keyword id="KW-0418">Kinase</keyword>
<keyword id="KW-0547">Nucleotide-binding</keyword>
<keyword id="KW-0539">Nucleus</keyword>
<keyword id="KW-1185">Reference proteome</keyword>
<keyword id="KW-0723">Serine/threonine-protein kinase</keyword>
<keyword id="KW-0808">Transferase</keyword>
<proteinExistence type="inferred from homology"/>
<organism>
    <name type="scientific">Debaryomyces hansenii (strain ATCC 36239 / CBS 767 / BCRC 21394 / JCM 1990 / NBRC 0083 / IGC 2968)</name>
    <name type="common">Yeast</name>
    <name type="synonym">Torulaspora hansenii</name>
    <dbReference type="NCBI Taxonomy" id="284592"/>
    <lineage>
        <taxon>Eukaryota</taxon>
        <taxon>Fungi</taxon>
        <taxon>Dikarya</taxon>
        <taxon>Ascomycota</taxon>
        <taxon>Saccharomycotina</taxon>
        <taxon>Pichiomycetes</taxon>
        <taxon>Debaryomycetaceae</taxon>
        <taxon>Debaryomyces</taxon>
    </lineage>
</organism>
<dbReference type="EC" id="2.7.11.22"/>
<dbReference type="EC" id="2.7.11.23"/>
<dbReference type="EMBL" id="CR382135">
    <property type="protein sequence ID" value="CAG86021.1"/>
    <property type="molecule type" value="Genomic_DNA"/>
</dbReference>
<dbReference type="RefSeq" id="XP_457963.1">
    <property type="nucleotide sequence ID" value="XM_457963.1"/>
</dbReference>
<dbReference type="SMR" id="Q6BV06"/>
<dbReference type="FunCoup" id="Q6BV06">
    <property type="interactions" value="284"/>
</dbReference>
<dbReference type="STRING" id="284592.Q6BV06"/>
<dbReference type="GeneID" id="2900800"/>
<dbReference type="KEGG" id="dha:DEHA2C06358g"/>
<dbReference type="VEuPathDB" id="FungiDB:DEHA2C06358g"/>
<dbReference type="eggNOG" id="KOG0600">
    <property type="taxonomic scope" value="Eukaryota"/>
</dbReference>
<dbReference type="HOGENOM" id="CLU_000288_181_21_1"/>
<dbReference type="InParanoid" id="Q6BV06"/>
<dbReference type="OrthoDB" id="28397at2759"/>
<dbReference type="Proteomes" id="UP000000599">
    <property type="component" value="Chromosome C"/>
</dbReference>
<dbReference type="GO" id="GO:0005634">
    <property type="term" value="C:nucleus"/>
    <property type="evidence" value="ECO:0007669"/>
    <property type="project" value="UniProtKB-SubCell"/>
</dbReference>
<dbReference type="GO" id="GO:0005524">
    <property type="term" value="F:ATP binding"/>
    <property type="evidence" value="ECO:0007669"/>
    <property type="project" value="UniProtKB-KW"/>
</dbReference>
<dbReference type="GO" id="GO:0004693">
    <property type="term" value="F:cyclin-dependent protein serine/threonine kinase activity"/>
    <property type="evidence" value="ECO:0007669"/>
    <property type="project" value="UniProtKB-EC"/>
</dbReference>
<dbReference type="GO" id="GO:0106310">
    <property type="term" value="F:protein serine kinase activity"/>
    <property type="evidence" value="ECO:0007669"/>
    <property type="project" value="RHEA"/>
</dbReference>
<dbReference type="GO" id="GO:0008353">
    <property type="term" value="F:RNA polymerase II CTD heptapeptide repeat kinase activity"/>
    <property type="evidence" value="ECO:0007669"/>
    <property type="project" value="UniProtKB-EC"/>
</dbReference>
<dbReference type="GO" id="GO:0030447">
    <property type="term" value="P:filamentous growth"/>
    <property type="evidence" value="ECO:0007669"/>
    <property type="project" value="UniProtKB-ARBA"/>
</dbReference>
<dbReference type="CDD" id="cd07866">
    <property type="entry name" value="STKc_BUR1"/>
    <property type="match status" value="1"/>
</dbReference>
<dbReference type="FunFam" id="1.10.510.10:FF:000415">
    <property type="entry name" value="CMGC/CDK/CRK7 protein kinase, variant"/>
    <property type="match status" value="1"/>
</dbReference>
<dbReference type="Gene3D" id="3.30.200.20">
    <property type="entry name" value="Phosphorylase Kinase, domain 1"/>
    <property type="match status" value="1"/>
</dbReference>
<dbReference type="Gene3D" id="1.10.510.10">
    <property type="entry name" value="Transferase(Phosphotransferase) domain 1"/>
    <property type="match status" value="1"/>
</dbReference>
<dbReference type="InterPro" id="IPR050108">
    <property type="entry name" value="CDK"/>
</dbReference>
<dbReference type="InterPro" id="IPR011009">
    <property type="entry name" value="Kinase-like_dom_sf"/>
</dbReference>
<dbReference type="InterPro" id="IPR000719">
    <property type="entry name" value="Prot_kinase_dom"/>
</dbReference>
<dbReference type="InterPro" id="IPR017441">
    <property type="entry name" value="Protein_kinase_ATP_BS"/>
</dbReference>
<dbReference type="InterPro" id="IPR008271">
    <property type="entry name" value="Ser/Thr_kinase_AS"/>
</dbReference>
<dbReference type="PANTHER" id="PTHR24056">
    <property type="entry name" value="CELL DIVISION PROTEIN KINASE"/>
    <property type="match status" value="1"/>
</dbReference>
<dbReference type="PANTHER" id="PTHR24056:SF233">
    <property type="entry name" value="CYCLIN-DEPENDENT KINASE 9"/>
    <property type="match status" value="1"/>
</dbReference>
<dbReference type="Pfam" id="PF00069">
    <property type="entry name" value="Pkinase"/>
    <property type="match status" value="1"/>
</dbReference>
<dbReference type="SMART" id="SM00220">
    <property type="entry name" value="S_TKc"/>
    <property type="match status" value="1"/>
</dbReference>
<dbReference type="SUPFAM" id="SSF56112">
    <property type="entry name" value="Protein kinase-like (PK-like)"/>
    <property type="match status" value="1"/>
</dbReference>
<dbReference type="PROSITE" id="PS00107">
    <property type="entry name" value="PROTEIN_KINASE_ATP"/>
    <property type="match status" value="1"/>
</dbReference>
<dbReference type="PROSITE" id="PS50011">
    <property type="entry name" value="PROTEIN_KINASE_DOM"/>
    <property type="match status" value="1"/>
</dbReference>
<dbReference type="PROSITE" id="PS00108">
    <property type="entry name" value="PROTEIN_KINASE_ST"/>
    <property type="match status" value="1"/>
</dbReference>
<protein>
    <recommendedName>
        <fullName>Serine/threonine-protein kinase BUR1</fullName>
        <ecNumber>2.7.11.22</ecNumber>
        <ecNumber>2.7.11.23</ecNumber>
    </recommendedName>
</protein>
<sequence>MECPEPSESVIPNDQSTKSCSIKLQPMNRFRDMSKLRNYEIIQKLGQGTFGVVQKARNIKTKELVALKQLINHSAKEGFPITAMREITILKKLNHKNILKIIDMIYEEPKISNPQDILHQRGCFYTVSPYMCSDLVGLLENPNINLEVSHIKCFMEQLLHGIQYIHEQMFLHRDIKAANILIDRNGTLKIADFGLARVYHGSPPKFMSGPGGGERAYTGLVVTRWYRPPELLLGERRYTTAVDMWGIGCVFGELFTRKPILVGKTDSHQAQLIFDLVGPPNSISWSEATSLPNKHDLNIGLTCQRSLESKFAPLMNPDGINLLSGLLTLDPYKRFNALDALNHNYFKNEPLPMKPQELPKFEECHEIDKERFKLLREKKNNIHEANKIPKAHFPKGPGEYNNSNNYPRNRNGSFPLALPKQPKFYNQHQQEAHVPQQMHTDTYIPKKRDDKPGANAPQKESSEPITSYQSLRDRSPRREGHISRKPSTTNSNNISSNSSASNVGGTLSNPTHQKNRPNAKASAGIFMTNSRKQRPKPNPQSSSRNVSDQFKKRKLLPDEQNESDLTDFDEDVKDSKQLDSFLDWDTFTRSPENRKLQHEKKQFETKYS</sequence>
<feature type="chain" id="PRO_0000085681" description="Serine/threonine-protein kinase BUR1">
    <location>
        <begin position="1"/>
        <end position="608"/>
    </location>
</feature>
<feature type="domain" description="Protein kinase" evidence="2">
    <location>
        <begin position="39"/>
        <end position="346"/>
    </location>
</feature>
<feature type="region of interest" description="Disordered" evidence="4">
    <location>
        <begin position="383"/>
        <end position="419"/>
    </location>
</feature>
<feature type="region of interest" description="Disordered" evidence="4">
    <location>
        <begin position="443"/>
        <end position="571"/>
    </location>
</feature>
<feature type="compositionally biased region" description="Low complexity" evidence="4">
    <location>
        <begin position="400"/>
        <end position="411"/>
    </location>
</feature>
<feature type="compositionally biased region" description="Basic and acidic residues" evidence="4">
    <location>
        <begin position="471"/>
        <end position="482"/>
    </location>
</feature>
<feature type="compositionally biased region" description="Low complexity" evidence="4">
    <location>
        <begin position="487"/>
        <end position="502"/>
    </location>
</feature>
<feature type="compositionally biased region" description="Polar residues" evidence="4">
    <location>
        <begin position="503"/>
        <end position="512"/>
    </location>
</feature>
<feature type="compositionally biased region" description="Polar residues" evidence="4">
    <location>
        <begin position="539"/>
        <end position="548"/>
    </location>
</feature>
<feature type="compositionally biased region" description="Acidic residues" evidence="4">
    <location>
        <begin position="559"/>
        <end position="571"/>
    </location>
</feature>
<feature type="active site" description="Proton acceptor" evidence="2 3">
    <location>
        <position position="174"/>
    </location>
</feature>
<feature type="binding site" evidence="2">
    <location>
        <begin position="45"/>
        <end position="53"/>
    </location>
    <ligand>
        <name>ATP</name>
        <dbReference type="ChEBI" id="CHEBI:30616"/>
    </ligand>
</feature>
<feature type="binding site" evidence="2">
    <location>
        <position position="68"/>
    </location>
    <ligand>
        <name>ATP</name>
        <dbReference type="ChEBI" id="CHEBI:30616"/>
    </ligand>
</feature>
<evidence type="ECO:0000250" key="1"/>
<evidence type="ECO:0000255" key="2">
    <source>
        <dbReference type="PROSITE-ProRule" id="PRU00159"/>
    </source>
</evidence>
<evidence type="ECO:0000255" key="3">
    <source>
        <dbReference type="PROSITE-ProRule" id="PRU10027"/>
    </source>
</evidence>
<evidence type="ECO:0000256" key="4">
    <source>
        <dbReference type="SAM" id="MobiDB-lite"/>
    </source>
</evidence>
<evidence type="ECO:0000305" key="5"/>